<keyword id="KW-0067">ATP-binding</keyword>
<keyword id="KW-0963">Cytoplasm</keyword>
<keyword id="KW-0436">Ligase</keyword>
<keyword id="KW-0547">Nucleotide-binding</keyword>
<keyword id="KW-0566">Pantothenate biosynthesis</keyword>
<keyword id="KW-1185">Reference proteome</keyword>
<organism>
    <name type="scientific">Shigella dysenteriae serotype 1 (strain Sd197)</name>
    <dbReference type="NCBI Taxonomy" id="300267"/>
    <lineage>
        <taxon>Bacteria</taxon>
        <taxon>Pseudomonadati</taxon>
        <taxon>Pseudomonadota</taxon>
        <taxon>Gammaproteobacteria</taxon>
        <taxon>Enterobacterales</taxon>
        <taxon>Enterobacteriaceae</taxon>
        <taxon>Shigella</taxon>
    </lineage>
</organism>
<dbReference type="EC" id="6.3.2.1" evidence="1"/>
<dbReference type="EMBL" id="CP000034">
    <property type="protein sequence ID" value="ABB60389.1"/>
    <property type="molecule type" value="Genomic_DNA"/>
</dbReference>
<dbReference type="RefSeq" id="WP_000905364.1">
    <property type="nucleotide sequence ID" value="NC_007606.1"/>
</dbReference>
<dbReference type="RefSeq" id="YP_401878.1">
    <property type="nucleotide sequence ID" value="NC_007606.1"/>
</dbReference>
<dbReference type="SMR" id="Q32JW8"/>
<dbReference type="STRING" id="300267.SDY_0155"/>
<dbReference type="EnsemblBacteria" id="ABB60389">
    <property type="protein sequence ID" value="ABB60389"/>
    <property type="gene ID" value="SDY_0155"/>
</dbReference>
<dbReference type="KEGG" id="sdy:SDY_0155"/>
<dbReference type="PATRIC" id="fig|300267.13.peg.175"/>
<dbReference type="HOGENOM" id="CLU_047148_0_0_6"/>
<dbReference type="UniPathway" id="UPA00028">
    <property type="reaction ID" value="UER00005"/>
</dbReference>
<dbReference type="Proteomes" id="UP000002716">
    <property type="component" value="Chromosome"/>
</dbReference>
<dbReference type="GO" id="GO:0005829">
    <property type="term" value="C:cytosol"/>
    <property type="evidence" value="ECO:0007669"/>
    <property type="project" value="TreeGrafter"/>
</dbReference>
<dbReference type="GO" id="GO:0005524">
    <property type="term" value="F:ATP binding"/>
    <property type="evidence" value="ECO:0007669"/>
    <property type="project" value="UniProtKB-KW"/>
</dbReference>
<dbReference type="GO" id="GO:0004592">
    <property type="term" value="F:pantoate-beta-alanine ligase activity"/>
    <property type="evidence" value="ECO:0007669"/>
    <property type="project" value="UniProtKB-UniRule"/>
</dbReference>
<dbReference type="GO" id="GO:0015940">
    <property type="term" value="P:pantothenate biosynthetic process"/>
    <property type="evidence" value="ECO:0007669"/>
    <property type="project" value="UniProtKB-UniRule"/>
</dbReference>
<dbReference type="CDD" id="cd00560">
    <property type="entry name" value="PanC"/>
    <property type="match status" value="1"/>
</dbReference>
<dbReference type="FunFam" id="3.30.1300.10:FF:000001">
    <property type="entry name" value="Pantothenate synthetase"/>
    <property type="match status" value="1"/>
</dbReference>
<dbReference type="FunFam" id="3.40.50.620:FF:000013">
    <property type="entry name" value="Pantothenate synthetase"/>
    <property type="match status" value="1"/>
</dbReference>
<dbReference type="Gene3D" id="3.40.50.620">
    <property type="entry name" value="HUPs"/>
    <property type="match status" value="1"/>
</dbReference>
<dbReference type="Gene3D" id="3.30.1300.10">
    <property type="entry name" value="Pantoate-beta-alanine ligase, C-terminal domain"/>
    <property type="match status" value="1"/>
</dbReference>
<dbReference type="HAMAP" id="MF_00158">
    <property type="entry name" value="PanC"/>
    <property type="match status" value="1"/>
</dbReference>
<dbReference type="InterPro" id="IPR004821">
    <property type="entry name" value="Cyt_trans-like"/>
</dbReference>
<dbReference type="InterPro" id="IPR003721">
    <property type="entry name" value="Pantoate_ligase"/>
</dbReference>
<dbReference type="InterPro" id="IPR042176">
    <property type="entry name" value="Pantoate_ligase_C"/>
</dbReference>
<dbReference type="InterPro" id="IPR014729">
    <property type="entry name" value="Rossmann-like_a/b/a_fold"/>
</dbReference>
<dbReference type="NCBIfam" id="TIGR00125">
    <property type="entry name" value="cyt_tran_rel"/>
    <property type="match status" value="1"/>
</dbReference>
<dbReference type="NCBIfam" id="TIGR00018">
    <property type="entry name" value="panC"/>
    <property type="match status" value="1"/>
</dbReference>
<dbReference type="PANTHER" id="PTHR21299">
    <property type="entry name" value="CYTIDYLATE KINASE/PANTOATE-BETA-ALANINE LIGASE"/>
    <property type="match status" value="1"/>
</dbReference>
<dbReference type="PANTHER" id="PTHR21299:SF1">
    <property type="entry name" value="PANTOATE--BETA-ALANINE LIGASE"/>
    <property type="match status" value="1"/>
</dbReference>
<dbReference type="Pfam" id="PF02569">
    <property type="entry name" value="Pantoate_ligase"/>
    <property type="match status" value="1"/>
</dbReference>
<dbReference type="SUPFAM" id="SSF52374">
    <property type="entry name" value="Nucleotidylyl transferase"/>
    <property type="match status" value="1"/>
</dbReference>
<proteinExistence type="inferred from homology"/>
<comment type="function">
    <text evidence="1">Catalyzes the condensation of pantoate with beta-alanine in an ATP-dependent reaction via a pantoyl-adenylate intermediate.</text>
</comment>
<comment type="catalytic activity">
    <reaction evidence="1">
        <text>(R)-pantoate + beta-alanine + ATP = (R)-pantothenate + AMP + diphosphate + H(+)</text>
        <dbReference type="Rhea" id="RHEA:10912"/>
        <dbReference type="ChEBI" id="CHEBI:15378"/>
        <dbReference type="ChEBI" id="CHEBI:15980"/>
        <dbReference type="ChEBI" id="CHEBI:29032"/>
        <dbReference type="ChEBI" id="CHEBI:30616"/>
        <dbReference type="ChEBI" id="CHEBI:33019"/>
        <dbReference type="ChEBI" id="CHEBI:57966"/>
        <dbReference type="ChEBI" id="CHEBI:456215"/>
        <dbReference type="EC" id="6.3.2.1"/>
    </reaction>
</comment>
<comment type="pathway">
    <text evidence="1">Cofactor biosynthesis; (R)-pantothenate biosynthesis; (R)-pantothenate from (R)-pantoate and beta-alanine: step 1/1.</text>
</comment>
<comment type="subunit">
    <text evidence="1">Homodimer.</text>
</comment>
<comment type="subcellular location">
    <subcellularLocation>
        <location evidence="1">Cytoplasm</location>
    </subcellularLocation>
</comment>
<comment type="miscellaneous">
    <text evidence="1">The reaction proceeds by a bi uni uni bi ping pong mechanism.</text>
</comment>
<comment type="similarity">
    <text evidence="1">Belongs to the pantothenate synthetase family.</text>
</comment>
<evidence type="ECO:0000255" key="1">
    <source>
        <dbReference type="HAMAP-Rule" id="MF_00158"/>
    </source>
</evidence>
<protein>
    <recommendedName>
        <fullName evidence="1">Pantothenate synthetase</fullName>
        <shortName evidence="1">PS</shortName>
        <ecNumber evidence="1">6.3.2.1</ecNumber>
    </recommendedName>
    <alternativeName>
        <fullName evidence="1">Pantoate--beta-alanine ligase</fullName>
    </alternativeName>
    <alternativeName>
        <fullName evidence="1">Pantoate-activating enzyme</fullName>
    </alternativeName>
</protein>
<reference key="1">
    <citation type="journal article" date="2005" name="Nucleic Acids Res.">
        <title>Genome dynamics and diversity of Shigella species, the etiologic agents of bacillary dysentery.</title>
        <authorList>
            <person name="Yang F."/>
            <person name="Yang J."/>
            <person name="Zhang X."/>
            <person name="Chen L."/>
            <person name="Jiang Y."/>
            <person name="Yan Y."/>
            <person name="Tang X."/>
            <person name="Wang J."/>
            <person name="Xiong Z."/>
            <person name="Dong J."/>
            <person name="Xue Y."/>
            <person name="Zhu Y."/>
            <person name="Xu X."/>
            <person name="Sun L."/>
            <person name="Chen S."/>
            <person name="Nie H."/>
            <person name="Peng J."/>
            <person name="Xu J."/>
            <person name="Wang Y."/>
            <person name="Yuan Z."/>
            <person name="Wen Y."/>
            <person name="Yao Z."/>
            <person name="Shen Y."/>
            <person name="Qiang B."/>
            <person name="Hou Y."/>
            <person name="Yu J."/>
            <person name="Jin Q."/>
        </authorList>
    </citation>
    <scope>NUCLEOTIDE SEQUENCE [LARGE SCALE GENOMIC DNA]</scope>
    <source>
        <strain>Sd197</strain>
    </source>
</reference>
<feature type="chain" id="PRO_0000305552" description="Pantothenate synthetase">
    <location>
        <begin position="1"/>
        <end position="283"/>
    </location>
</feature>
<feature type="active site" description="Proton donor" evidence="1">
    <location>
        <position position="37"/>
    </location>
</feature>
<feature type="binding site" evidence="1">
    <location>
        <begin position="30"/>
        <end position="37"/>
    </location>
    <ligand>
        <name>ATP</name>
        <dbReference type="ChEBI" id="CHEBI:30616"/>
    </ligand>
</feature>
<feature type="binding site" evidence="1">
    <location>
        <position position="61"/>
    </location>
    <ligand>
        <name>(R)-pantoate</name>
        <dbReference type="ChEBI" id="CHEBI:15980"/>
    </ligand>
</feature>
<feature type="binding site" evidence="1">
    <location>
        <position position="61"/>
    </location>
    <ligand>
        <name>beta-alanine</name>
        <dbReference type="ChEBI" id="CHEBI:57966"/>
    </ligand>
</feature>
<feature type="binding site" evidence="1">
    <location>
        <begin position="149"/>
        <end position="152"/>
    </location>
    <ligand>
        <name>ATP</name>
        <dbReference type="ChEBI" id="CHEBI:30616"/>
    </ligand>
</feature>
<feature type="binding site" evidence="1">
    <location>
        <position position="155"/>
    </location>
    <ligand>
        <name>(R)-pantoate</name>
        <dbReference type="ChEBI" id="CHEBI:15980"/>
    </ligand>
</feature>
<feature type="binding site" evidence="1">
    <location>
        <begin position="186"/>
        <end position="189"/>
    </location>
    <ligand>
        <name>ATP</name>
        <dbReference type="ChEBI" id="CHEBI:30616"/>
    </ligand>
</feature>
<sequence>MLIIETLPLLRQQIRRLRMEGKRVALVPTMGNLHDGHMKLVDEAKARADVVVVSIFVNPMQFDRPEDLARYPRTLQEDCEKLNKRKVDLVFAPSVKEIYPNGTETHTYVDVPGLSTMLEGASRPGHFRGVSTIVSKLFNLVQPDIACFGEKDFQQLALIRKMVADMGFDIEIVGVPIMRAKDGLALSSRNGYLTAEQCQIAPGLYKVLSSIADKLQAGERDLDEIIAIAGQELNEKGFRADDIQIRDADTLLEVSETSKRAVILVAAWLGDARLIDNKIVELA</sequence>
<accession>Q32JW8</accession>
<name>PANC_SHIDS</name>
<gene>
    <name evidence="1" type="primary">panC</name>
    <name type="ordered locus">SDY_0155</name>
</gene>